<accession>Q949T8</accession>
<accession>O65563</accession>
<evidence type="ECO:0000250" key="1"/>
<evidence type="ECO:0000255" key="2">
    <source>
        <dbReference type="PROSITE-ProRule" id="PRU00155"/>
    </source>
</evidence>
<evidence type="ECO:0000255" key="3">
    <source>
        <dbReference type="PROSITE-ProRule" id="PRU00190"/>
    </source>
</evidence>
<evidence type="ECO:0000255" key="4">
    <source>
        <dbReference type="PROSITE-ProRule" id="PRU00562"/>
    </source>
</evidence>
<evidence type="ECO:0000255" key="5">
    <source>
        <dbReference type="PROSITE-ProRule" id="PRU00911"/>
    </source>
</evidence>
<evidence type="ECO:0000269" key="6">
    <source>
    </source>
</evidence>
<evidence type="ECO:0000305" key="7"/>
<evidence type="ECO:0000305" key="8">
    <source>
    </source>
</evidence>
<comment type="function">
    <text evidence="1">Histone methyltransferase (By similarity). Involved in stamen development.</text>
</comment>
<comment type="catalytic activity">
    <reaction evidence="5">
        <text>L-lysyl-[histone] + S-adenosyl-L-methionine = N(6)-methyl-L-lysyl-[histone] + S-adenosyl-L-homocysteine + H(+)</text>
        <dbReference type="Rhea" id="RHEA:10024"/>
        <dbReference type="Rhea" id="RHEA-COMP:9845"/>
        <dbReference type="Rhea" id="RHEA-COMP:9846"/>
        <dbReference type="ChEBI" id="CHEBI:15378"/>
        <dbReference type="ChEBI" id="CHEBI:29969"/>
        <dbReference type="ChEBI" id="CHEBI:57856"/>
        <dbReference type="ChEBI" id="CHEBI:59789"/>
        <dbReference type="ChEBI" id="CHEBI:61929"/>
    </reaction>
</comment>
<comment type="subunit">
    <text evidence="6">Interacts with AMS/bHLH21 by its SET domain and PHD finger.</text>
</comment>
<comment type="interaction">
    <interactant intactId="EBI-4457339">
        <id>Q949T8</id>
    </interactant>
    <interactant intactId="EBI-4426649">
        <id>Q17TI5</id>
        <label>BRX</label>
    </interactant>
    <organismsDiffer>false</organismsDiffer>
    <experiments>3</experiments>
</comment>
<comment type="subcellular location">
    <subcellularLocation>
        <location evidence="6">Nucleus</location>
    </subcellularLocation>
    <subcellularLocation>
        <location evidence="8">Chromosome</location>
    </subcellularLocation>
    <text>Associated to the euchromatin.</text>
</comment>
<comment type="tissue specificity">
    <text evidence="6">Expressed in roots, flowers and buds, the anther and in stamen filaments.</text>
</comment>
<comment type="developmental stage">
    <text>First observed at low levels in the vasculature and around hydathodes of developing leaves. In flowers, restricted to anthers tapetum at a post-meiosis stage, to filaments, and to microspores during their development. Disappears as pollen matures. In developing roots, expressed throughout the lower part, in the cap, in the epidermis and in non-epidermal tissue in the division and elongation zone. Also detected in cells lining lateral root formation.</text>
</comment>
<comment type="similarity">
    <text evidence="5">Belongs to the class V-like SAM-binding methyltransferase superfamily. Histone-lysine methyltransferase family. SET2 subfamily.</text>
</comment>
<comment type="sequence caution" evidence="7">
    <conflict type="erroneous gene model prediction">
        <sequence resource="EMBL-CDS" id="CAA18207"/>
    </conflict>
</comment>
<comment type="sequence caution" evidence="7">
    <conflict type="erroneous gene model prediction">
        <sequence resource="EMBL-CDS" id="CAB79804"/>
    </conflict>
</comment>
<name>ASHR3_ARATH</name>
<proteinExistence type="evidence at protein level"/>
<dbReference type="EC" id="2.1.1.-"/>
<dbReference type="EMBL" id="AB195469">
    <property type="protein sequence ID" value="BAD72877.1"/>
    <property type="molecule type" value="Genomic_DNA"/>
</dbReference>
<dbReference type="EMBL" id="AL022198">
    <property type="protein sequence ID" value="CAA18207.1"/>
    <property type="status" value="ALT_SEQ"/>
    <property type="molecule type" value="Genomic_DNA"/>
</dbReference>
<dbReference type="EMBL" id="AL161577">
    <property type="protein sequence ID" value="CAB79804.1"/>
    <property type="status" value="ALT_SEQ"/>
    <property type="molecule type" value="Genomic_DNA"/>
</dbReference>
<dbReference type="EMBL" id="CP002687">
    <property type="protein sequence ID" value="AEE85821.1"/>
    <property type="molecule type" value="Genomic_DNA"/>
</dbReference>
<dbReference type="EMBL" id="AY050894">
    <property type="protein sequence ID" value="AAK92831.1"/>
    <property type="molecule type" value="mRNA"/>
</dbReference>
<dbReference type="EMBL" id="AY096675">
    <property type="protein sequence ID" value="AAM20309.1"/>
    <property type="molecule type" value="mRNA"/>
</dbReference>
<dbReference type="PIR" id="C85361">
    <property type="entry name" value="C85361"/>
</dbReference>
<dbReference type="RefSeq" id="NP_567859.1">
    <property type="nucleotide sequence ID" value="NM_119233.2"/>
</dbReference>
<dbReference type="SMR" id="Q949T8"/>
<dbReference type="BioGRID" id="14497">
    <property type="interactions" value="5"/>
</dbReference>
<dbReference type="FunCoup" id="Q949T8">
    <property type="interactions" value="33"/>
</dbReference>
<dbReference type="IntAct" id="Q949T8">
    <property type="interactions" value="4"/>
</dbReference>
<dbReference type="STRING" id="3702.Q949T8"/>
<dbReference type="PaxDb" id="3702-AT4G30860.1"/>
<dbReference type="ProteomicsDB" id="246789"/>
<dbReference type="EnsemblPlants" id="AT4G30860.1">
    <property type="protein sequence ID" value="AT4G30860.1"/>
    <property type="gene ID" value="AT4G30860"/>
</dbReference>
<dbReference type="GeneID" id="829210"/>
<dbReference type="Gramene" id="AT4G30860.1">
    <property type="protein sequence ID" value="AT4G30860.1"/>
    <property type="gene ID" value="AT4G30860"/>
</dbReference>
<dbReference type="KEGG" id="ath:AT4G30860"/>
<dbReference type="Araport" id="AT4G30860"/>
<dbReference type="TAIR" id="AT4G30860">
    <property type="gene designation" value="SDG4"/>
</dbReference>
<dbReference type="eggNOG" id="KOG1081">
    <property type="taxonomic scope" value="Eukaryota"/>
</dbReference>
<dbReference type="HOGENOM" id="CLU_020840_10_2_1"/>
<dbReference type="InParanoid" id="Q949T8"/>
<dbReference type="OMA" id="KCHCGAP"/>
<dbReference type="PhylomeDB" id="Q949T8"/>
<dbReference type="PRO" id="PR:Q949T8"/>
<dbReference type="Proteomes" id="UP000006548">
    <property type="component" value="Chromosome 4"/>
</dbReference>
<dbReference type="ExpressionAtlas" id="Q949T8">
    <property type="expression patterns" value="baseline and differential"/>
</dbReference>
<dbReference type="GO" id="GO:0000785">
    <property type="term" value="C:chromatin"/>
    <property type="evidence" value="ECO:0000314"/>
    <property type="project" value="TAIR"/>
</dbReference>
<dbReference type="GO" id="GO:0005634">
    <property type="term" value="C:nucleus"/>
    <property type="evidence" value="ECO:0000314"/>
    <property type="project" value="TAIR"/>
</dbReference>
<dbReference type="GO" id="GO:0008168">
    <property type="term" value="F:methyltransferase activity"/>
    <property type="evidence" value="ECO:0007669"/>
    <property type="project" value="UniProtKB-KW"/>
</dbReference>
<dbReference type="GO" id="GO:0008270">
    <property type="term" value="F:zinc ion binding"/>
    <property type="evidence" value="ECO:0007669"/>
    <property type="project" value="UniProtKB-KW"/>
</dbReference>
<dbReference type="GO" id="GO:0006325">
    <property type="term" value="P:chromatin organization"/>
    <property type="evidence" value="ECO:0007669"/>
    <property type="project" value="UniProtKB-KW"/>
</dbReference>
<dbReference type="GO" id="GO:0032259">
    <property type="term" value="P:methylation"/>
    <property type="evidence" value="ECO:0007669"/>
    <property type="project" value="UniProtKB-KW"/>
</dbReference>
<dbReference type="CDD" id="cd15565">
    <property type="entry name" value="PHD2_NSD"/>
    <property type="match status" value="1"/>
</dbReference>
<dbReference type="CDD" id="cd19175">
    <property type="entry name" value="SET_ASHR3-like"/>
    <property type="match status" value="1"/>
</dbReference>
<dbReference type="FunFam" id="2.170.270.10:FF:000043">
    <property type="entry name" value="Histone-lysine N-methyltransferase"/>
    <property type="match status" value="1"/>
</dbReference>
<dbReference type="FunFam" id="3.30.40.10:FF:000888">
    <property type="entry name" value="Histone-lysine N-methyltransferase"/>
    <property type="match status" value="1"/>
</dbReference>
<dbReference type="Gene3D" id="2.170.270.10">
    <property type="entry name" value="SET domain"/>
    <property type="match status" value="1"/>
</dbReference>
<dbReference type="Gene3D" id="3.30.40.10">
    <property type="entry name" value="Zinc/RING finger domain, C3HC4 (zinc finger)"/>
    <property type="match status" value="1"/>
</dbReference>
<dbReference type="InterPro" id="IPR047893">
    <property type="entry name" value="ASHR3-like_SET"/>
</dbReference>
<dbReference type="InterPro" id="IPR006560">
    <property type="entry name" value="AWS_dom"/>
</dbReference>
<dbReference type="InterPro" id="IPR025787">
    <property type="entry name" value="Hist-Lys_N-MeTrfase_SET2_plant"/>
</dbReference>
<dbReference type="InterPro" id="IPR003616">
    <property type="entry name" value="Post-SET_dom"/>
</dbReference>
<dbReference type="InterPro" id="IPR050777">
    <property type="entry name" value="SET2_Histone-Lys_MeTrsfase"/>
</dbReference>
<dbReference type="InterPro" id="IPR001214">
    <property type="entry name" value="SET_dom"/>
</dbReference>
<dbReference type="InterPro" id="IPR046341">
    <property type="entry name" value="SET_dom_sf"/>
</dbReference>
<dbReference type="InterPro" id="IPR001965">
    <property type="entry name" value="Znf_PHD"/>
</dbReference>
<dbReference type="InterPro" id="IPR013083">
    <property type="entry name" value="Znf_RING/FYVE/PHD"/>
</dbReference>
<dbReference type="PANTHER" id="PTHR22884">
    <property type="entry name" value="SET DOMAIN PROTEINS"/>
    <property type="match status" value="1"/>
</dbReference>
<dbReference type="Pfam" id="PF00856">
    <property type="entry name" value="SET"/>
    <property type="match status" value="1"/>
</dbReference>
<dbReference type="SMART" id="SM00249">
    <property type="entry name" value="PHD"/>
    <property type="match status" value="1"/>
</dbReference>
<dbReference type="SMART" id="SM00508">
    <property type="entry name" value="PostSET"/>
    <property type="match status" value="1"/>
</dbReference>
<dbReference type="SMART" id="SM00317">
    <property type="entry name" value="SET"/>
    <property type="match status" value="1"/>
</dbReference>
<dbReference type="SUPFAM" id="SSF82199">
    <property type="entry name" value="SET domain"/>
    <property type="match status" value="1"/>
</dbReference>
<dbReference type="PROSITE" id="PS51215">
    <property type="entry name" value="AWS"/>
    <property type="match status" value="1"/>
</dbReference>
<dbReference type="PROSITE" id="PS50868">
    <property type="entry name" value="POST_SET"/>
    <property type="match status" value="1"/>
</dbReference>
<dbReference type="PROSITE" id="PS51578">
    <property type="entry name" value="SAM_MT43_SET2_2"/>
    <property type="match status" value="1"/>
</dbReference>
<dbReference type="PROSITE" id="PS50280">
    <property type="entry name" value="SET"/>
    <property type="match status" value="1"/>
</dbReference>
<dbReference type="PROSITE" id="PS01359">
    <property type="entry name" value="ZF_PHD_1"/>
    <property type="match status" value="1"/>
</dbReference>
<sequence length="497" mass="56122">MLDLGNMSMSASVALTCCPSFLPAASGPELAKSINSPENLAGECNGKHLPMIPPEEEVKDIKIANGVTAFTRKQNPSDRVKKGFVLDDHVKDWVKRRVASGVSESTCFLPFLVGAKKMVDCLVCHKPVYPGEDLSCSVRGCQGAYHSLCAKESLGFSKSSKFKCPQHECFVCKQRTQWRCVKCPMAAHDKHSPWSKEILHLKDQPGRAVCWRHPTDWRLDTKHAVAQSEIEEVFCQLPLPYVEEEFKIDLAWKDSVVKEDPPSYVHIRRNIYLVKKKRDNANDGVGCTNCGPNCDRSCVCRVQCISCSKGCSCPESCGNRPFRKEKKIKIVKTEHCGWGVEAAESINKEDFIVEYIGEVISDAQCEQRLWDMKHKGMKDFYMCEIQKDFTIDATFKGNASRFLNHSCNPNCVLEKWQVEGETRVGVFAARQIEAGEPLTYDYRFVQFGPEVKCNCGSENCQGYLGTKRKEPNCLVVSWGAKRRRLFHRPIARKPQQD</sequence>
<feature type="chain" id="PRO_0000233376" description="Histone-lysine N-methyltransferase ASHR3">
    <location>
        <begin position="1"/>
        <end position="497"/>
    </location>
</feature>
<feature type="domain" description="AWS" evidence="4">
    <location>
        <begin position="283"/>
        <end position="326"/>
    </location>
</feature>
<feature type="domain" description="SET" evidence="3">
    <location>
        <begin position="326"/>
        <end position="443"/>
    </location>
</feature>
<feature type="domain" description="Post-SET" evidence="2">
    <location>
        <begin position="449"/>
        <end position="465"/>
    </location>
</feature>
<feature type="zinc finger region" description="PHD-type">
    <location>
        <begin position="118"/>
        <end position="186"/>
    </location>
</feature>
<protein>
    <recommendedName>
        <fullName>Histone-lysine N-methyltransferase ASHR3</fullName>
        <ecNumber>2.1.1.-</ecNumber>
    </recommendedName>
    <alternativeName>
        <fullName>ASH1-related protein 3</fullName>
    </alternativeName>
    <alternativeName>
        <fullName>Protein SET DOMAIN GROUP 4</fullName>
    </alternativeName>
    <alternativeName>
        <fullName>Protein stamen loss</fullName>
    </alternativeName>
</protein>
<gene>
    <name type="primary">ASHR3</name>
    <name type="synonym">SDG4</name>
    <name type="synonym">SET4</name>
    <name type="synonym">SML</name>
    <name type="ordered locus">At4g30860</name>
    <name type="ORF">F6I18.230</name>
</gene>
<reference key="1">
    <citation type="submission" date="2004-11" db="EMBL/GenBank/DDBJ databases">
        <title>The chromosome-associated protein SML regulates lateral stamen development in Arabidopsis.</title>
        <authorList>
            <person name="Cartagena J.A."/>
            <person name="Matsunaga S."/>
            <person name="Kurihara D."/>
            <person name="Fujimoto S."/>
            <person name="Azumi Y."/>
            <person name="Uchiyama S."/>
            <person name="Fukui K."/>
        </authorList>
    </citation>
    <scope>NUCLEOTIDE SEQUENCE [GENOMIC DNA]</scope>
</reference>
<reference key="2">
    <citation type="journal article" date="1999" name="Nature">
        <title>Sequence and analysis of chromosome 4 of the plant Arabidopsis thaliana.</title>
        <authorList>
            <person name="Mayer K.F.X."/>
            <person name="Schueller C."/>
            <person name="Wambutt R."/>
            <person name="Murphy G."/>
            <person name="Volckaert G."/>
            <person name="Pohl T."/>
            <person name="Duesterhoeft A."/>
            <person name="Stiekema W."/>
            <person name="Entian K.-D."/>
            <person name="Terryn N."/>
            <person name="Harris B."/>
            <person name="Ansorge W."/>
            <person name="Brandt P."/>
            <person name="Grivell L.A."/>
            <person name="Rieger M."/>
            <person name="Weichselgartner M."/>
            <person name="de Simone V."/>
            <person name="Obermaier B."/>
            <person name="Mache R."/>
            <person name="Mueller M."/>
            <person name="Kreis M."/>
            <person name="Delseny M."/>
            <person name="Puigdomenech P."/>
            <person name="Watson M."/>
            <person name="Schmidtheini T."/>
            <person name="Reichert B."/>
            <person name="Portetelle D."/>
            <person name="Perez-Alonso M."/>
            <person name="Boutry M."/>
            <person name="Bancroft I."/>
            <person name="Vos P."/>
            <person name="Hoheisel J."/>
            <person name="Zimmermann W."/>
            <person name="Wedler H."/>
            <person name="Ridley P."/>
            <person name="Langham S.-A."/>
            <person name="McCullagh B."/>
            <person name="Bilham L."/>
            <person name="Robben J."/>
            <person name="van der Schueren J."/>
            <person name="Grymonprez B."/>
            <person name="Chuang Y.-J."/>
            <person name="Vandenbussche F."/>
            <person name="Braeken M."/>
            <person name="Weltjens I."/>
            <person name="Voet M."/>
            <person name="Bastiaens I."/>
            <person name="Aert R."/>
            <person name="Defoor E."/>
            <person name="Weitzenegger T."/>
            <person name="Bothe G."/>
            <person name="Ramsperger U."/>
            <person name="Hilbert H."/>
            <person name="Braun M."/>
            <person name="Holzer E."/>
            <person name="Brandt A."/>
            <person name="Peters S."/>
            <person name="van Staveren M."/>
            <person name="Dirkse W."/>
            <person name="Mooijman P."/>
            <person name="Klein Lankhorst R."/>
            <person name="Rose M."/>
            <person name="Hauf J."/>
            <person name="Koetter P."/>
            <person name="Berneiser S."/>
            <person name="Hempel S."/>
            <person name="Feldpausch M."/>
            <person name="Lamberth S."/>
            <person name="Van den Daele H."/>
            <person name="De Keyser A."/>
            <person name="Buysshaert C."/>
            <person name="Gielen J."/>
            <person name="Villarroel R."/>
            <person name="De Clercq R."/>
            <person name="van Montagu M."/>
            <person name="Rogers J."/>
            <person name="Cronin A."/>
            <person name="Quail M.A."/>
            <person name="Bray-Allen S."/>
            <person name="Clark L."/>
            <person name="Doggett J."/>
            <person name="Hall S."/>
            <person name="Kay M."/>
            <person name="Lennard N."/>
            <person name="McLay K."/>
            <person name="Mayes R."/>
            <person name="Pettett A."/>
            <person name="Rajandream M.A."/>
            <person name="Lyne M."/>
            <person name="Benes V."/>
            <person name="Rechmann S."/>
            <person name="Borkova D."/>
            <person name="Bloecker H."/>
            <person name="Scharfe M."/>
            <person name="Grimm M."/>
            <person name="Loehnert T.-H."/>
            <person name="Dose S."/>
            <person name="de Haan M."/>
            <person name="Maarse A.C."/>
            <person name="Schaefer M."/>
            <person name="Mueller-Auer S."/>
            <person name="Gabel C."/>
            <person name="Fuchs M."/>
            <person name="Fartmann B."/>
            <person name="Granderath K."/>
            <person name="Dauner D."/>
            <person name="Herzl A."/>
            <person name="Neumann S."/>
            <person name="Argiriou A."/>
            <person name="Vitale D."/>
            <person name="Liguori R."/>
            <person name="Piravandi E."/>
            <person name="Massenet O."/>
            <person name="Quigley F."/>
            <person name="Clabauld G."/>
            <person name="Muendlein A."/>
            <person name="Felber R."/>
            <person name="Schnabl S."/>
            <person name="Hiller R."/>
            <person name="Schmidt W."/>
            <person name="Lecharny A."/>
            <person name="Aubourg S."/>
            <person name="Chefdor F."/>
            <person name="Cooke R."/>
            <person name="Berger C."/>
            <person name="Monfort A."/>
            <person name="Casacuberta E."/>
            <person name="Gibbons T."/>
            <person name="Weber N."/>
            <person name="Vandenbol M."/>
            <person name="Bargues M."/>
            <person name="Terol J."/>
            <person name="Torres A."/>
            <person name="Perez-Perez A."/>
            <person name="Purnelle B."/>
            <person name="Bent E."/>
            <person name="Johnson S."/>
            <person name="Tacon D."/>
            <person name="Jesse T."/>
            <person name="Heijnen L."/>
            <person name="Schwarz S."/>
            <person name="Scholler P."/>
            <person name="Heber S."/>
            <person name="Francs P."/>
            <person name="Bielke C."/>
            <person name="Frishman D."/>
            <person name="Haase D."/>
            <person name="Lemcke K."/>
            <person name="Mewes H.-W."/>
            <person name="Stocker S."/>
            <person name="Zaccaria P."/>
            <person name="Bevan M."/>
            <person name="Wilson R.K."/>
            <person name="de la Bastide M."/>
            <person name="Habermann K."/>
            <person name="Parnell L."/>
            <person name="Dedhia N."/>
            <person name="Gnoj L."/>
            <person name="Schutz K."/>
            <person name="Huang E."/>
            <person name="Spiegel L."/>
            <person name="Sekhon M."/>
            <person name="Murray J."/>
            <person name="Sheet P."/>
            <person name="Cordes M."/>
            <person name="Abu-Threideh J."/>
            <person name="Stoneking T."/>
            <person name="Kalicki J."/>
            <person name="Graves T."/>
            <person name="Harmon G."/>
            <person name="Edwards J."/>
            <person name="Latreille P."/>
            <person name="Courtney L."/>
            <person name="Cloud J."/>
            <person name="Abbott A."/>
            <person name="Scott K."/>
            <person name="Johnson D."/>
            <person name="Minx P."/>
            <person name="Bentley D."/>
            <person name="Fulton B."/>
            <person name="Miller N."/>
            <person name="Greco T."/>
            <person name="Kemp K."/>
            <person name="Kramer J."/>
            <person name="Fulton L."/>
            <person name="Mardis E."/>
            <person name="Dante M."/>
            <person name="Pepin K."/>
            <person name="Hillier L.W."/>
            <person name="Nelson J."/>
            <person name="Spieth J."/>
            <person name="Ryan E."/>
            <person name="Andrews S."/>
            <person name="Geisel C."/>
            <person name="Layman D."/>
            <person name="Du H."/>
            <person name="Ali J."/>
            <person name="Berghoff A."/>
            <person name="Jones K."/>
            <person name="Drone K."/>
            <person name="Cotton M."/>
            <person name="Joshu C."/>
            <person name="Antonoiu B."/>
            <person name="Zidanic M."/>
            <person name="Strong C."/>
            <person name="Sun H."/>
            <person name="Lamar B."/>
            <person name="Yordan C."/>
            <person name="Ma P."/>
            <person name="Zhong J."/>
            <person name="Preston R."/>
            <person name="Vil D."/>
            <person name="Shekher M."/>
            <person name="Matero A."/>
            <person name="Shah R."/>
            <person name="Swaby I.K."/>
            <person name="O'Shaughnessy A."/>
            <person name="Rodriguez M."/>
            <person name="Hoffman J."/>
            <person name="Till S."/>
            <person name="Granat S."/>
            <person name="Shohdy N."/>
            <person name="Hasegawa A."/>
            <person name="Hameed A."/>
            <person name="Lodhi M."/>
            <person name="Johnson A."/>
            <person name="Chen E."/>
            <person name="Marra M.A."/>
            <person name="Martienssen R."/>
            <person name="McCombie W.R."/>
        </authorList>
    </citation>
    <scope>NUCLEOTIDE SEQUENCE [LARGE SCALE GENOMIC DNA]</scope>
    <source>
        <strain>cv. Columbia</strain>
    </source>
</reference>
<reference key="3">
    <citation type="journal article" date="2017" name="Plant J.">
        <title>Araport11: a complete reannotation of the Arabidopsis thaliana reference genome.</title>
        <authorList>
            <person name="Cheng C.Y."/>
            <person name="Krishnakumar V."/>
            <person name="Chan A.P."/>
            <person name="Thibaud-Nissen F."/>
            <person name="Schobel S."/>
            <person name="Town C.D."/>
        </authorList>
    </citation>
    <scope>GENOME REANNOTATION</scope>
    <source>
        <strain>cv. Columbia</strain>
    </source>
</reference>
<reference key="4">
    <citation type="journal article" date="2003" name="Science">
        <title>Empirical analysis of transcriptional activity in the Arabidopsis genome.</title>
        <authorList>
            <person name="Yamada K."/>
            <person name="Lim J."/>
            <person name="Dale J.M."/>
            <person name="Chen H."/>
            <person name="Shinn P."/>
            <person name="Palm C.J."/>
            <person name="Southwick A.M."/>
            <person name="Wu H.C."/>
            <person name="Kim C.J."/>
            <person name="Nguyen M."/>
            <person name="Pham P.K."/>
            <person name="Cheuk R.F."/>
            <person name="Karlin-Newmann G."/>
            <person name="Liu S.X."/>
            <person name="Lam B."/>
            <person name="Sakano H."/>
            <person name="Wu T."/>
            <person name="Yu G."/>
            <person name="Miranda M."/>
            <person name="Quach H.L."/>
            <person name="Tripp M."/>
            <person name="Chang C.H."/>
            <person name="Lee J.M."/>
            <person name="Toriumi M.J."/>
            <person name="Chan M.M."/>
            <person name="Tang C.C."/>
            <person name="Onodera C.S."/>
            <person name="Deng J.M."/>
            <person name="Akiyama K."/>
            <person name="Ansari Y."/>
            <person name="Arakawa T."/>
            <person name="Banh J."/>
            <person name="Banno F."/>
            <person name="Bowser L."/>
            <person name="Brooks S.Y."/>
            <person name="Carninci P."/>
            <person name="Chao Q."/>
            <person name="Choy N."/>
            <person name="Enju A."/>
            <person name="Goldsmith A.D."/>
            <person name="Gurjal M."/>
            <person name="Hansen N.F."/>
            <person name="Hayashizaki Y."/>
            <person name="Johnson-Hopson C."/>
            <person name="Hsuan V.W."/>
            <person name="Iida K."/>
            <person name="Karnes M."/>
            <person name="Khan S."/>
            <person name="Koesema E."/>
            <person name="Ishida J."/>
            <person name="Jiang P.X."/>
            <person name="Jones T."/>
            <person name="Kawai J."/>
            <person name="Kamiya A."/>
            <person name="Meyers C."/>
            <person name="Nakajima M."/>
            <person name="Narusaka M."/>
            <person name="Seki M."/>
            <person name="Sakurai T."/>
            <person name="Satou M."/>
            <person name="Tamse R."/>
            <person name="Vaysberg M."/>
            <person name="Wallender E.K."/>
            <person name="Wong C."/>
            <person name="Yamamura Y."/>
            <person name="Yuan S."/>
            <person name="Shinozaki K."/>
            <person name="Davis R.W."/>
            <person name="Theologis A."/>
            <person name="Ecker J.R."/>
        </authorList>
    </citation>
    <scope>NUCLEOTIDE SEQUENCE [LARGE SCALE MRNA]</scope>
    <source>
        <strain>cv. Columbia</strain>
    </source>
</reference>
<reference key="5">
    <citation type="journal article" date="2001" name="Nucleic Acids Res.">
        <title>The Arabidopsis thaliana genome contains at least 29 active genes encoding SET domain proteins that can be assigned to four evolutionarily conserved classes.</title>
        <authorList>
            <person name="Baumbusch L.O."/>
            <person name="Thorstensen T."/>
            <person name="Krauss V."/>
            <person name="Fischer A."/>
            <person name="Naumann K."/>
            <person name="Assalkhou R."/>
            <person name="Schulz I."/>
            <person name="Reuter G."/>
            <person name="Aalen R.B."/>
        </authorList>
    </citation>
    <scope>NOMENCLATURE</scope>
</reference>
<reference key="6">
    <citation type="journal article" date="2008" name="Plant Mol. Biol.">
        <title>The Arabidopsis SET-domain protein ASHR3 is involved in stamen development and interacts with the bHLH transcription factor ABORTED MICROSPORES (AMS).</title>
        <authorList>
            <person name="Thorstensen T."/>
            <person name="Grini P.E."/>
            <person name="Mercy I.S."/>
            <person name="Alm V."/>
            <person name="Erdal S."/>
            <person name="Aasland R."/>
            <person name="Aalen R.B."/>
        </authorList>
    </citation>
    <scope>SUBCELLULAR LOCATION</scope>
    <scope>TISSUE SPECIFICITY</scope>
    <scope>INTERACTION WITH AMS</scope>
</reference>
<keyword id="KW-0156">Chromatin regulator</keyword>
<keyword id="KW-0158">Chromosome</keyword>
<keyword id="KW-0217">Developmental protein</keyword>
<keyword id="KW-0479">Metal-binding</keyword>
<keyword id="KW-0489">Methyltransferase</keyword>
<keyword id="KW-0539">Nucleus</keyword>
<keyword id="KW-1185">Reference proteome</keyword>
<keyword id="KW-0949">S-adenosyl-L-methionine</keyword>
<keyword id="KW-0808">Transferase</keyword>
<keyword id="KW-0862">Zinc</keyword>
<keyword id="KW-0863">Zinc-finger</keyword>
<organism>
    <name type="scientific">Arabidopsis thaliana</name>
    <name type="common">Mouse-ear cress</name>
    <dbReference type="NCBI Taxonomy" id="3702"/>
    <lineage>
        <taxon>Eukaryota</taxon>
        <taxon>Viridiplantae</taxon>
        <taxon>Streptophyta</taxon>
        <taxon>Embryophyta</taxon>
        <taxon>Tracheophyta</taxon>
        <taxon>Spermatophyta</taxon>
        <taxon>Magnoliopsida</taxon>
        <taxon>eudicotyledons</taxon>
        <taxon>Gunneridae</taxon>
        <taxon>Pentapetalae</taxon>
        <taxon>rosids</taxon>
        <taxon>malvids</taxon>
        <taxon>Brassicales</taxon>
        <taxon>Brassicaceae</taxon>
        <taxon>Camelineae</taxon>
        <taxon>Arabidopsis</taxon>
    </lineage>
</organism>